<sequence length="221" mass="24867">MSDSEEESQDRQLKIVVLGDGASGKTSLATCFAQETFGKRYKQTIGLDFFLRRITLPGNLNVTLQIWDIGGQTIGGKMLDKYIYGAQGVLLVYDITNYQSFENLEDWYTVVKKVSEESETRPLVALVGNKIDLEHMRTIKPEKHLRFCQENGFSSHFVSAKTGDSVFLCFQKVAAEILGIKLNKAEIEQSQRVVKADIVNYNQEPMSRTVNPPRSSMCAVQ</sequence>
<organism>
    <name type="scientific">Pongo abelii</name>
    <name type="common">Sumatran orangutan</name>
    <name type="synonym">Pongo pygmaeus abelii</name>
    <dbReference type="NCBI Taxonomy" id="9601"/>
    <lineage>
        <taxon>Eukaryota</taxon>
        <taxon>Metazoa</taxon>
        <taxon>Chordata</taxon>
        <taxon>Craniata</taxon>
        <taxon>Vertebrata</taxon>
        <taxon>Euteleostomi</taxon>
        <taxon>Mammalia</taxon>
        <taxon>Eutheria</taxon>
        <taxon>Euarchontoglires</taxon>
        <taxon>Primates</taxon>
        <taxon>Haplorrhini</taxon>
        <taxon>Catarrhini</taxon>
        <taxon>Hominidae</taxon>
        <taxon>Pongo</taxon>
    </lineage>
</organism>
<comment type="function">
    <text evidence="2 3 6">The small GTPases Rab are key regulators of intracellular membrane trafficking, from the formation of transport vesicles to their fusion with membranes. Rabs cycle between an inactive GDP-bound form and an active GTP-bound form that is able to recruit to membranes different sets of downstream effectors directly responsible for vesicle formation, movement, tethering and fusion (By similarity). RAB28 is required for shedding and phagocytosis of cone cell outer segments (OS) discs in the retina (By similarity). Also participates in nuclear factor kappa-B p65/RELA nuclear transport in endothelial cells (By similarity).</text>
</comment>
<comment type="catalytic activity">
    <reaction evidence="2">
        <text>GTP + H2O = GDP + phosphate + H(+)</text>
        <dbReference type="Rhea" id="RHEA:19669"/>
        <dbReference type="ChEBI" id="CHEBI:15377"/>
        <dbReference type="ChEBI" id="CHEBI:15378"/>
        <dbReference type="ChEBI" id="CHEBI:37565"/>
        <dbReference type="ChEBI" id="CHEBI:43474"/>
        <dbReference type="ChEBI" id="CHEBI:58189"/>
        <dbReference type="EC" id="3.6.5.2"/>
    </reaction>
    <physiologicalReaction direction="left-to-right" evidence="2">
        <dbReference type="Rhea" id="RHEA:19670"/>
    </physiologicalReaction>
</comment>
<comment type="cofactor">
    <cofactor evidence="2">
        <name>Mg(2+)</name>
        <dbReference type="ChEBI" id="CHEBI:18420"/>
    </cofactor>
</comment>
<comment type="activity regulation">
    <text evidence="2">Regulated by guanine nucleotide exchange factors (GEFs) which promote the exchange of bound GDP for free GTP. Regulated by GTPase activating proteins (GAPs) which increase the GTP hydrolysis activity. Inhibited by GDP dissociation inhibitors (GDIs).</text>
</comment>
<comment type="subunit">
    <text evidence="3 5">Interacts (prenylated form) with PDE6D; the interaction promotes RAB28 delivery to the photoreceptor outer segments. Interacts with KCNJ13; the interaction may facilitate cone outer segments phagocytosis (By similarity). Also participates in nuclear factor kappa-B p65/RELA nuclear transport in endothelial cells (By similarity).</text>
</comment>
<comment type="subcellular location">
    <subcellularLocation>
        <location evidence="8">Cell membrane</location>
        <topology evidence="8">Lipid-anchor</topology>
        <orientation evidence="8">Cytoplasmic side</orientation>
    </subcellularLocation>
    <subcellularLocation>
        <location evidence="3">Cytoplasm</location>
        <location evidence="3">Cytoskeleton</location>
        <location evidence="3">Cilium basal body</location>
    </subcellularLocation>
    <subcellularLocation>
        <location evidence="3">Cytoplasm</location>
    </subcellularLocation>
    <subcellularLocation>
        <location evidence="3">Nucleus</location>
    </subcellularLocation>
    <text evidence="3">Expressed in the basal body and ciliary rootlet of the photoreceptor cells. Localized in the cytoplasm and the nucleus of vascular endothelial cells.</text>
</comment>
<comment type="domain">
    <text evidence="2">Switch I, switch II and the interswitch regions are characteristic of Rab GTPases and mediate the interactions with Rab downstream effectors. The switch regions undergo conformational changes upon nucleotide binding which drive interaction with specific sets of effector proteins, with most effectors only binding to GTP-bound Rab.</text>
</comment>
<comment type="PTM">
    <text evidence="2">Isoprenylated.</text>
</comment>
<comment type="similarity">
    <text evidence="8">Belongs to the small GTPase superfamily. Rab family.</text>
</comment>
<dbReference type="EC" id="3.6.5.2" evidence="2"/>
<dbReference type="EMBL" id="CR857175">
    <property type="protein sequence ID" value="CAH89475.1"/>
    <property type="molecule type" value="mRNA"/>
</dbReference>
<dbReference type="RefSeq" id="NP_001124634.1">
    <property type="nucleotide sequence ID" value="NM_001131162.1"/>
</dbReference>
<dbReference type="SMR" id="Q5RFI2"/>
<dbReference type="FunCoup" id="Q5RFI2">
    <property type="interactions" value="1146"/>
</dbReference>
<dbReference type="STRING" id="9601.ENSPPYP00000016323"/>
<dbReference type="GeneID" id="100171473"/>
<dbReference type="KEGG" id="pon:100171473"/>
<dbReference type="CTD" id="9364"/>
<dbReference type="eggNOG" id="KOG0078">
    <property type="taxonomic scope" value="Eukaryota"/>
</dbReference>
<dbReference type="InParanoid" id="Q5RFI2"/>
<dbReference type="OrthoDB" id="6585768at2759"/>
<dbReference type="Proteomes" id="UP000001595">
    <property type="component" value="Unplaced"/>
</dbReference>
<dbReference type="GO" id="GO:0036064">
    <property type="term" value="C:ciliary basal body"/>
    <property type="evidence" value="ECO:0000250"/>
    <property type="project" value="UniProtKB"/>
</dbReference>
<dbReference type="GO" id="GO:0035253">
    <property type="term" value="C:ciliary rootlet"/>
    <property type="evidence" value="ECO:0000250"/>
    <property type="project" value="UniProtKB"/>
</dbReference>
<dbReference type="GO" id="GO:0005737">
    <property type="term" value="C:cytoplasm"/>
    <property type="evidence" value="ECO:0007669"/>
    <property type="project" value="UniProtKB-KW"/>
</dbReference>
<dbReference type="GO" id="GO:0005886">
    <property type="term" value="C:plasma membrane"/>
    <property type="evidence" value="ECO:0007669"/>
    <property type="project" value="UniProtKB-SubCell"/>
</dbReference>
<dbReference type="GO" id="GO:0003925">
    <property type="term" value="F:G protein activity"/>
    <property type="evidence" value="ECO:0000250"/>
    <property type="project" value="UniProtKB"/>
</dbReference>
<dbReference type="GO" id="GO:0019003">
    <property type="term" value="F:GDP binding"/>
    <property type="evidence" value="ECO:0000250"/>
    <property type="project" value="UniProtKB"/>
</dbReference>
<dbReference type="GO" id="GO:0005525">
    <property type="term" value="F:GTP binding"/>
    <property type="evidence" value="ECO:0000250"/>
    <property type="project" value="UniProtKB"/>
</dbReference>
<dbReference type="CDD" id="cd04109">
    <property type="entry name" value="Rab28"/>
    <property type="match status" value="1"/>
</dbReference>
<dbReference type="FunFam" id="3.40.50.300:FF:000513">
    <property type="entry name" value="ras-related protein Rab-28 isoform X2"/>
    <property type="match status" value="1"/>
</dbReference>
<dbReference type="Gene3D" id="3.40.50.300">
    <property type="entry name" value="P-loop containing nucleotide triphosphate hydrolases"/>
    <property type="match status" value="1"/>
</dbReference>
<dbReference type="InterPro" id="IPR027417">
    <property type="entry name" value="P-loop_NTPase"/>
</dbReference>
<dbReference type="InterPro" id="IPR005225">
    <property type="entry name" value="Small_GTP-bd"/>
</dbReference>
<dbReference type="InterPro" id="IPR001806">
    <property type="entry name" value="Small_GTPase"/>
</dbReference>
<dbReference type="NCBIfam" id="TIGR00231">
    <property type="entry name" value="small_GTP"/>
    <property type="match status" value="1"/>
</dbReference>
<dbReference type="PANTHER" id="PTHR47978">
    <property type="match status" value="1"/>
</dbReference>
<dbReference type="Pfam" id="PF00071">
    <property type="entry name" value="Ras"/>
    <property type="match status" value="1"/>
</dbReference>
<dbReference type="PRINTS" id="PR00449">
    <property type="entry name" value="RASTRNSFRMNG"/>
</dbReference>
<dbReference type="SMART" id="SM00175">
    <property type="entry name" value="RAB"/>
    <property type="match status" value="1"/>
</dbReference>
<dbReference type="SMART" id="SM00176">
    <property type="entry name" value="RAN"/>
    <property type="match status" value="1"/>
</dbReference>
<dbReference type="SMART" id="SM00173">
    <property type="entry name" value="RAS"/>
    <property type="match status" value="1"/>
</dbReference>
<dbReference type="SMART" id="SM00174">
    <property type="entry name" value="RHO"/>
    <property type="match status" value="1"/>
</dbReference>
<dbReference type="SUPFAM" id="SSF52540">
    <property type="entry name" value="P-loop containing nucleoside triphosphate hydrolases"/>
    <property type="match status" value="1"/>
</dbReference>
<dbReference type="PROSITE" id="PS51419">
    <property type="entry name" value="RAB"/>
    <property type="match status" value="1"/>
</dbReference>
<protein>
    <recommendedName>
        <fullName>Ras-related protein Rab-28</fullName>
        <ecNumber evidence="2">3.6.5.2</ecNumber>
    </recommendedName>
</protein>
<feature type="initiator methionine" description="Removed" evidence="2">
    <location>
        <position position="1"/>
    </location>
</feature>
<feature type="chain" id="PRO_0000260531" description="Ras-related protein Rab-28">
    <location>
        <begin position="2"/>
        <end position="218"/>
    </location>
</feature>
<feature type="propeptide" id="PRO_0000396723" description="Removed in mature form" evidence="1">
    <location>
        <begin position="219"/>
        <end position="221"/>
    </location>
</feature>
<feature type="region of interest" description="Switch I" evidence="7">
    <location>
        <begin position="35"/>
        <end position="49"/>
    </location>
</feature>
<feature type="region of interest" description="Switch II" evidence="7">
    <location>
        <begin position="68"/>
        <end position="85"/>
    </location>
</feature>
<feature type="binding site" evidence="2">
    <location>
        <position position="21"/>
    </location>
    <ligand>
        <name>GTP</name>
        <dbReference type="ChEBI" id="CHEBI:37565"/>
    </ligand>
</feature>
<feature type="binding site" evidence="2">
    <location>
        <position position="24"/>
    </location>
    <ligand>
        <name>GTP</name>
        <dbReference type="ChEBI" id="CHEBI:37565"/>
    </ligand>
</feature>
<feature type="binding site" evidence="2">
    <location>
        <position position="25"/>
    </location>
    <ligand>
        <name>GTP</name>
        <dbReference type="ChEBI" id="CHEBI:37565"/>
    </ligand>
</feature>
<feature type="binding site" evidence="2">
    <location>
        <position position="26"/>
    </location>
    <ligand>
        <name>GTP</name>
        <dbReference type="ChEBI" id="CHEBI:37565"/>
    </ligand>
</feature>
<feature type="binding site" evidence="4">
    <location>
        <position position="26"/>
    </location>
    <ligand>
        <name>Mg(2+)</name>
        <dbReference type="ChEBI" id="CHEBI:18420"/>
    </ligand>
</feature>
<feature type="binding site" evidence="2">
    <location>
        <position position="27"/>
    </location>
    <ligand>
        <name>GTP</name>
        <dbReference type="ChEBI" id="CHEBI:37565"/>
    </ligand>
</feature>
<feature type="binding site" evidence="2">
    <location>
        <position position="38"/>
    </location>
    <ligand>
        <name>GTP</name>
        <dbReference type="ChEBI" id="CHEBI:37565"/>
    </ligand>
</feature>
<feature type="binding site" evidence="2">
    <location>
        <position position="39"/>
    </location>
    <ligand>
        <name>GTP</name>
        <dbReference type="ChEBI" id="CHEBI:37565"/>
    </ligand>
</feature>
<feature type="binding site" evidence="2">
    <location>
        <position position="41"/>
    </location>
    <ligand>
        <name>GTP</name>
        <dbReference type="ChEBI" id="CHEBI:37565"/>
    </ligand>
</feature>
<feature type="binding site" evidence="2">
    <location>
        <position position="44"/>
    </location>
    <ligand>
        <name>GTP</name>
        <dbReference type="ChEBI" id="CHEBI:37565"/>
    </ligand>
</feature>
<feature type="binding site" evidence="4">
    <location>
        <position position="44"/>
    </location>
    <ligand>
        <name>Mg(2+)</name>
        <dbReference type="ChEBI" id="CHEBI:18420"/>
    </ligand>
</feature>
<feature type="binding site" evidence="4">
    <location>
        <position position="68"/>
    </location>
    <ligand>
        <name>Mg(2+)</name>
        <dbReference type="ChEBI" id="CHEBI:18420"/>
    </ligand>
</feature>
<feature type="binding site" evidence="2">
    <location>
        <position position="71"/>
    </location>
    <ligand>
        <name>GTP</name>
        <dbReference type="ChEBI" id="CHEBI:37565"/>
    </ligand>
</feature>
<feature type="binding site" evidence="2">
    <location>
        <position position="129"/>
    </location>
    <ligand>
        <name>GTP</name>
        <dbReference type="ChEBI" id="CHEBI:37565"/>
    </ligand>
</feature>
<feature type="binding site" evidence="2">
    <location>
        <position position="130"/>
    </location>
    <ligand>
        <name>GTP</name>
        <dbReference type="ChEBI" id="CHEBI:37565"/>
    </ligand>
</feature>
<feature type="binding site" evidence="2">
    <location>
        <position position="132"/>
    </location>
    <ligand>
        <name>GTP</name>
        <dbReference type="ChEBI" id="CHEBI:37565"/>
    </ligand>
</feature>
<feature type="binding site" evidence="2">
    <location>
        <position position="160"/>
    </location>
    <ligand>
        <name>GTP</name>
        <dbReference type="ChEBI" id="CHEBI:37565"/>
    </ligand>
</feature>
<feature type="binding site" evidence="2">
    <location>
        <position position="161"/>
    </location>
    <ligand>
        <name>GTP</name>
        <dbReference type="ChEBI" id="CHEBI:37565"/>
    </ligand>
</feature>
<feature type="modified residue" description="N-acetylserine" evidence="2">
    <location>
        <position position="2"/>
    </location>
</feature>
<feature type="modified residue" description="Phosphoserine" evidence="2">
    <location>
        <position position="8"/>
    </location>
</feature>
<feature type="modified residue" description="Cysteine methyl ester" evidence="1">
    <location>
        <position position="218"/>
    </location>
</feature>
<feature type="lipid moiety-binding region" description="S-farnesyl cysteine" evidence="1">
    <location>
        <position position="218"/>
    </location>
</feature>
<evidence type="ECO:0000250" key="1"/>
<evidence type="ECO:0000250" key="2">
    <source>
        <dbReference type="UniProtKB" id="P51157"/>
    </source>
</evidence>
<evidence type="ECO:0000250" key="3">
    <source>
        <dbReference type="UniProtKB" id="P51158"/>
    </source>
</evidence>
<evidence type="ECO:0000250" key="4">
    <source>
        <dbReference type="UniProtKB" id="P62820"/>
    </source>
</evidence>
<evidence type="ECO:0000250" key="5">
    <source>
        <dbReference type="UniProtKB" id="Q3SWY9"/>
    </source>
</evidence>
<evidence type="ECO:0000250" key="6">
    <source>
        <dbReference type="UniProtKB" id="Q99KL7"/>
    </source>
</evidence>
<evidence type="ECO:0000255" key="7">
    <source>
        <dbReference type="PROSITE-ProRule" id="PRU00753"/>
    </source>
</evidence>
<evidence type="ECO:0000305" key="8"/>
<gene>
    <name type="primary">RAB28</name>
</gene>
<keyword id="KW-0007">Acetylation</keyword>
<keyword id="KW-1003">Cell membrane</keyword>
<keyword id="KW-0966">Cell projection</keyword>
<keyword id="KW-0963">Cytoplasm</keyword>
<keyword id="KW-0206">Cytoskeleton</keyword>
<keyword id="KW-0342">GTP-binding</keyword>
<keyword id="KW-0378">Hydrolase</keyword>
<keyword id="KW-0449">Lipoprotein</keyword>
<keyword id="KW-0460">Magnesium</keyword>
<keyword id="KW-0472">Membrane</keyword>
<keyword id="KW-0479">Metal-binding</keyword>
<keyword id="KW-0488">Methylation</keyword>
<keyword id="KW-0547">Nucleotide-binding</keyword>
<keyword id="KW-0539">Nucleus</keyword>
<keyword id="KW-0597">Phosphoprotein</keyword>
<keyword id="KW-0636">Prenylation</keyword>
<keyword id="KW-1185">Reference proteome</keyword>
<accession>Q5RFI2</accession>
<name>RAB28_PONAB</name>
<proteinExistence type="evidence at transcript level"/>
<reference key="1">
    <citation type="submission" date="2004-11" db="EMBL/GenBank/DDBJ databases">
        <authorList>
            <consortium name="The German cDNA consortium"/>
        </authorList>
    </citation>
    <scope>NUCLEOTIDE SEQUENCE [LARGE SCALE MRNA]</scope>
    <source>
        <tissue>Kidney</tissue>
    </source>
</reference>